<protein>
    <recommendedName>
        <fullName evidence="6 7">Serine rich endogenous peptide 10</fullName>
        <shortName evidence="6 7">AtSCOOP10</shortName>
    </recommendedName>
    <alternativeName>
        <fullName evidence="6 7">Phytocytokine SCOOP10</fullName>
    </alternativeName>
    <alternativeName>
        <fullName evidence="6 7">Precursor of serine rich endogenous peptide phytocytokine 10</fullName>
    </alternativeName>
</protein>
<sequence>MERKKFSSKFIHLLIVFLLLCTFLSRTESALPYHHELFLGRKRMNYYKPNSAIGTPSSTSDHAPGSNGRKLMSIYRPNGDIFTGPSGSGHGGGRTPAP</sequence>
<dbReference type="EMBL" id="AB024024">
    <property type="protein sequence ID" value="BAA98111.1"/>
    <property type="molecule type" value="Genomic_DNA"/>
</dbReference>
<dbReference type="EMBL" id="CP002688">
    <property type="protein sequence ID" value="AED95133.1"/>
    <property type="molecule type" value="Genomic_DNA"/>
</dbReference>
<dbReference type="EMBL" id="AF370472">
    <property type="protein sequence ID" value="AAK43849.1"/>
    <property type="molecule type" value="mRNA"/>
</dbReference>
<dbReference type="EMBL" id="AF424553">
    <property type="protein sequence ID" value="AAL11547.1"/>
    <property type="molecule type" value="mRNA"/>
</dbReference>
<dbReference type="EMBL" id="AY045808">
    <property type="protein sequence ID" value="AAK76482.1"/>
    <property type="molecule type" value="mRNA"/>
</dbReference>
<dbReference type="EMBL" id="AY079416">
    <property type="protein sequence ID" value="AAL85147.1"/>
    <property type="molecule type" value="mRNA"/>
</dbReference>
<dbReference type="EMBL" id="BT000359">
    <property type="protein sequence ID" value="AAN15678.1"/>
    <property type="molecule type" value="mRNA"/>
</dbReference>
<dbReference type="RefSeq" id="NP_568635.1">
    <property type="nucleotide sequence ID" value="NM_123825.5"/>
</dbReference>
<dbReference type="FunCoup" id="Q9LU08">
    <property type="interactions" value="12"/>
</dbReference>
<dbReference type="IntAct" id="Q9LU08">
    <property type="interactions" value="1"/>
</dbReference>
<dbReference type="GlyGen" id="Q9LU08">
    <property type="glycosylation" value="1 site"/>
</dbReference>
<dbReference type="PaxDb" id="3702-AT5G44580.1"/>
<dbReference type="EnsemblPlants" id="AT5G44580.1">
    <property type="protein sequence ID" value="AT5G44580.1"/>
    <property type="gene ID" value="AT5G44580"/>
</dbReference>
<dbReference type="GeneID" id="834486"/>
<dbReference type="Gramene" id="AT5G44580.1">
    <property type="protein sequence ID" value="AT5G44580.1"/>
    <property type="gene ID" value="AT5G44580"/>
</dbReference>
<dbReference type="KEGG" id="ath:AT5G44580"/>
<dbReference type="Araport" id="AT5G44580"/>
<dbReference type="TAIR" id="AT5G44580"/>
<dbReference type="HOGENOM" id="CLU_2309927_0_0_1"/>
<dbReference type="InParanoid" id="Q9LU08"/>
<dbReference type="OMA" id="YHHELFL"/>
<dbReference type="PRO" id="PR:Q9LU08"/>
<dbReference type="Proteomes" id="UP000006548">
    <property type="component" value="Chromosome 5"/>
</dbReference>
<dbReference type="GO" id="GO:0048046">
    <property type="term" value="C:apoplast"/>
    <property type="evidence" value="ECO:0000250"/>
    <property type="project" value="UniProtKB"/>
</dbReference>
<dbReference type="GO" id="GO:0005886">
    <property type="term" value="C:plasma membrane"/>
    <property type="evidence" value="ECO:0007669"/>
    <property type="project" value="UniProtKB-SubCell"/>
</dbReference>
<dbReference type="GO" id="GO:0030275">
    <property type="term" value="F:LRR domain binding"/>
    <property type="evidence" value="ECO:0000250"/>
    <property type="project" value="UniProtKB"/>
</dbReference>
<dbReference type="GO" id="GO:0033612">
    <property type="term" value="F:receptor serine/threonine kinase binding"/>
    <property type="evidence" value="ECO:0000250"/>
    <property type="project" value="UniProtKB"/>
</dbReference>
<comment type="function">
    <text evidence="4 5">Brassicaceae-specific phytocytokine (plant endogenous peptide released into the apoplast) perceived by MIK2 in a BAK1/SERK3 and SERK4 coreceptors-dependent manner, that modulates various physiological and antimicrobial processes including growth prevention and reactive oxygen species (ROS) response regulation (PubMed:33514716, PubMed:34535661). Inhibits root growth and regulates root meristems (PubMed:34535661). Promotes ROS production and MAPK (e.g. MPK3, MPK4 and MPK6) activation in a MIK2-dependent manner, thus leading to the up-regulation of immune-related marker genes (e.g. WRKY30, WRKY33 and CYP81F2) (PubMed:34535661).</text>
</comment>
<comment type="subunit">
    <text evidence="5">Interacts with MIK2 (via extracellular leucine-rich repeat domain); this interaction triggers the formation of complex between MIK2 and the BAK1/SERK3 and SERK4 coreceptors, and subsequent BAK1 activation by phosphorylation.</text>
</comment>
<comment type="subcellular location">
    <subcellularLocation>
        <location evidence="1">Cell membrane</location>
    </subcellularLocation>
    <subcellularLocation>
        <location evidence="1">Secreted</location>
        <location evidence="1">Extracellular space</location>
        <location evidence="1">Apoplast</location>
    </subcellularLocation>
    <text evidence="1">The precursor of SCOOP10, PROSCOOP10, accumulates at the plasma membrane and is proteolytically cleaved to release the SCOOP10 in the apoplasm.</text>
</comment>
<comment type="tissue specificity">
    <text evidence="5">Mostly expressed in leaves and seedlings shoots, to a lower extent, in roots, but barely in flowers.</text>
</comment>
<comment type="similarity">
    <text evidence="8">Belongs to the serine rich endogenous peptide (SCOOP) phytocytokine family.</text>
</comment>
<keyword id="KW-0052">Apoplast</keyword>
<keyword id="KW-1003">Cell membrane</keyword>
<keyword id="KW-0165">Cleavage on pair of basic residues</keyword>
<keyword id="KW-0472">Membrane</keyword>
<keyword id="KW-1185">Reference proteome</keyword>
<keyword id="KW-0677">Repeat</keyword>
<keyword id="KW-0964">Secreted</keyword>
<keyword id="KW-0732">Signal</keyword>
<name>SOP10_ARATH</name>
<evidence type="ECO:0000250" key="1">
    <source>
        <dbReference type="UniProtKB" id="B3H7I1"/>
    </source>
</evidence>
<evidence type="ECO:0000255" key="2"/>
<evidence type="ECO:0000256" key="3">
    <source>
        <dbReference type="SAM" id="MobiDB-lite"/>
    </source>
</evidence>
<evidence type="ECO:0000269" key="4">
    <source>
    </source>
</evidence>
<evidence type="ECO:0000269" key="5">
    <source>
    </source>
</evidence>
<evidence type="ECO:0000303" key="6">
    <source>
    </source>
</evidence>
<evidence type="ECO:0000303" key="7">
    <source>
    </source>
</evidence>
<evidence type="ECO:0000305" key="8"/>
<evidence type="ECO:0000305" key="9">
    <source>
    </source>
</evidence>
<evidence type="ECO:0000312" key="10">
    <source>
        <dbReference type="Araport" id="AT5G44580"/>
    </source>
</evidence>
<evidence type="ECO:0000312" key="11">
    <source>
        <dbReference type="EMBL" id="BAA98111.1"/>
    </source>
</evidence>
<proteinExistence type="evidence at protein level"/>
<accession>Q9LU08</accession>
<reference key="1">
    <citation type="submission" date="1999-02" db="EMBL/GenBank/DDBJ databases">
        <title>Structural analysis of Arabidopsis thaliana chromosome 5. XI.</title>
        <authorList>
            <person name="Kaneko T."/>
            <person name="Katoh T."/>
            <person name="Asamizu E."/>
            <person name="Sato S."/>
            <person name="Nakamura Y."/>
            <person name="Kotani H."/>
            <person name="Tabata S."/>
        </authorList>
    </citation>
    <scope>NUCLEOTIDE SEQUENCE [LARGE SCALE GENOMIC DNA]</scope>
    <source>
        <strain>cv. Columbia</strain>
    </source>
</reference>
<reference key="2">
    <citation type="journal article" date="2017" name="Plant J.">
        <title>Araport11: a complete reannotation of the Arabidopsis thaliana reference genome.</title>
        <authorList>
            <person name="Cheng C.Y."/>
            <person name="Krishnakumar V."/>
            <person name="Chan A.P."/>
            <person name="Thibaud-Nissen F."/>
            <person name="Schobel S."/>
            <person name="Town C.D."/>
        </authorList>
    </citation>
    <scope>GENOME REANNOTATION</scope>
    <source>
        <strain>cv. Columbia</strain>
    </source>
</reference>
<reference key="3">
    <citation type="journal article" date="2003" name="Science">
        <title>Empirical analysis of transcriptional activity in the Arabidopsis genome.</title>
        <authorList>
            <person name="Yamada K."/>
            <person name="Lim J."/>
            <person name="Dale J.M."/>
            <person name="Chen H."/>
            <person name="Shinn P."/>
            <person name="Palm C.J."/>
            <person name="Southwick A.M."/>
            <person name="Wu H.C."/>
            <person name="Kim C.J."/>
            <person name="Nguyen M."/>
            <person name="Pham P.K."/>
            <person name="Cheuk R.F."/>
            <person name="Karlin-Newmann G."/>
            <person name="Liu S.X."/>
            <person name="Lam B."/>
            <person name="Sakano H."/>
            <person name="Wu T."/>
            <person name="Yu G."/>
            <person name="Miranda M."/>
            <person name="Quach H.L."/>
            <person name="Tripp M."/>
            <person name="Chang C.H."/>
            <person name="Lee J.M."/>
            <person name="Toriumi M.J."/>
            <person name="Chan M.M."/>
            <person name="Tang C.C."/>
            <person name="Onodera C.S."/>
            <person name="Deng J.M."/>
            <person name="Akiyama K."/>
            <person name="Ansari Y."/>
            <person name="Arakawa T."/>
            <person name="Banh J."/>
            <person name="Banno F."/>
            <person name="Bowser L."/>
            <person name="Brooks S.Y."/>
            <person name="Carninci P."/>
            <person name="Chao Q."/>
            <person name="Choy N."/>
            <person name="Enju A."/>
            <person name="Goldsmith A.D."/>
            <person name="Gurjal M."/>
            <person name="Hansen N.F."/>
            <person name="Hayashizaki Y."/>
            <person name="Johnson-Hopson C."/>
            <person name="Hsuan V.W."/>
            <person name="Iida K."/>
            <person name="Karnes M."/>
            <person name="Khan S."/>
            <person name="Koesema E."/>
            <person name="Ishida J."/>
            <person name="Jiang P.X."/>
            <person name="Jones T."/>
            <person name="Kawai J."/>
            <person name="Kamiya A."/>
            <person name="Meyers C."/>
            <person name="Nakajima M."/>
            <person name="Narusaka M."/>
            <person name="Seki M."/>
            <person name="Sakurai T."/>
            <person name="Satou M."/>
            <person name="Tamse R."/>
            <person name="Vaysberg M."/>
            <person name="Wallender E.K."/>
            <person name="Wong C."/>
            <person name="Yamamura Y."/>
            <person name="Yuan S."/>
            <person name="Shinozaki K."/>
            <person name="Davis R.W."/>
            <person name="Theologis A."/>
            <person name="Ecker J.R."/>
        </authorList>
    </citation>
    <scope>NUCLEOTIDE SEQUENCE [LARGE SCALE MRNA]</scope>
    <source>
        <strain>cv. Columbia</strain>
    </source>
</reference>
<reference key="4">
    <citation type="journal article" date="2019" name="J. Exp. Bot.">
        <title>The SCOOP12 peptide regulates defense response and root elongation in Arabidopsis thaliana.</title>
        <authorList>
            <person name="Gully K."/>
            <person name="Pelletier S."/>
            <person name="Guillou M.-C."/>
            <person name="Ferrand M."/>
            <person name="Aligon S."/>
            <person name="Pokotylo I."/>
            <person name="Perrin A."/>
            <person name="Vergne E."/>
            <person name="Fagard M."/>
            <person name="Ruelland E."/>
            <person name="Grappin P."/>
            <person name="Bucher E."/>
            <person name="Renou J.-P."/>
            <person name="Aubourg S."/>
        </authorList>
    </citation>
    <scope>GENE FAMILY</scope>
    <source>
        <strain>cv. Columbia</strain>
        <strain>cv. Wassilewskija</strain>
    </source>
</reference>
<reference key="5">
    <citation type="journal article" date="2021" name="Nat. Commun.">
        <title>Perception of a divergent family of phytocytokines by the Arabidopsis receptor kinase MIK2.</title>
        <authorList>
            <person name="Rhodes J."/>
            <person name="Yang H."/>
            <person name="Moussu S."/>
            <person name="Boutrot F."/>
            <person name="Santiago J."/>
            <person name="Zipfel C."/>
        </authorList>
    </citation>
    <scope>FUNCTION</scope>
    <scope>GENE FAMILY</scope>
    <source>
        <strain>cv. Columbia</strain>
        <strain>cv. Wassilewskija-2</strain>
    </source>
</reference>
<reference key="6">
    <citation type="journal article" date="2021" name="Nat. Commun.">
        <title>The Arabidopsis MIK2 receptor elicits immunity by sensing a conserved signature from phytocytokines and microbes.</title>
        <authorList>
            <person name="Hou S."/>
            <person name="Liu D."/>
            <person name="Huang S."/>
            <person name="Luo D."/>
            <person name="Liu Z."/>
            <person name="Xiang Q."/>
            <person name="Wang P."/>
            <person name="Mu R."/>
            <person name="Han Z."/>
            <person name="Chen S."/>
            <person name="Chai J."/>
            <person name="Shan L."/>
            <person name="He P."/>
        </authorList>
    </citation>
    <scope>FUNCTION</scope>
    <scope>TISSUE SPECIFICITY</scope>
    <scope>SUBUNIT</scope>
    <scope>GENE FAMILY</scope>
    <scope>NOMENCLATURE</scope>
    <source>
        <strain>cv. Columbia</strain>
    </source>
</reference>
<gene>
    <name evidence="6 7" type="primary">PROSCOOP10</name>
    <name evidence="6 7" type="synonym">SCOOP10</name>
    <name evidence="10" type="ordered locus">At5g44580</name>
    <name evidence="11" type="ORF">K15C23.2</name>
</gene>
<feature type="signal peptide" evidence="2">
    <location>
        <begin position="1"/>
        <end position="29"/>
    </location>
</feature>
<feature type="propeptide" id="PRO_0000457232" description="Removed in mature form" evidence="1">
    <location>
        <begin position="30"/>
        <end status="unknown"/>
    </location>
</feature>
<feature type="peptide" id="PRO_0000457233" description="Serine rich endogenous peptide 10" evidence="1">
    <location>
        <begin status="unknown"/>
        <end position="98"/>
    </location>
</feature>
<feature type="region of interest" description="Disordered" evidence="3">
    <location>
        <begin position="50"/>
        <end position="98"/>
    </location>
</feature>
<feature type="short sequence motif" description="SCOOP motif 1" evidence="9">
    <location>
        <begin position="52"/>
        <end position="66"/>
    </location>
</feature>
<feature type="short sequence motif" description="SxS motif essential for MIK2 binding" evidence="1">
    <location>
        <begin position="58"/>
        <end position="60"/>
    </location>
</feature>
<feature type="short sequence motif" description="SCOOP motif 2" evidence="9">
    <location>
        <begin position="80"/>
        <end position="94"/>
    </location>
</feature>
<feature type="short sequence motif" description="SxS motif essential for MIK2 binding" evidence="1">
    <location>
        <begin position="86"/>
        <end position="88"/>
    </location>
</feature>
<feature type="compositionally biased region" description="Polar residues" evidence="3">
    <location>
        <begin position="52"/>
        <end position="61"/>
    </location>
</feature>
<feature type="compositionally biased region" description="Gly residues" evidence="3">
    <location>
        <begin position="86"/>
        <end position="98"/>
    </location>
</feature>
<organism>
    <name type="scientific">Arabidopsis thaliana</name>
    <name type="common">Mouse-ear cress</name>
    <dbReference type="NCBI Taxonomy" id="3702"/>
    <lineage>
        <taxon>Eukaryota</taxon>
        <taxon>Viridiplantae</taxon>
        <taxon>Streptophyta</taxon>
        <taxon>Embryophyta</taxon>
        <taxon>Tracheophyta</taxon>
        <taxon>Spermatophyta</taxon>
        <taxon>Magnoliopsida</taxon>
        <taxon>eudicotyledons</taxon>
        <taxon>Gunneridae</taxon>
        <taxon>Pentapetalae</taxon>
        <taxon>rosids</taxon>
        <taxon>malvids</taxon>
        <taxon>Brassicales</taxon>
        <taxon>Brassicaceae</taxon>
        <taxon>Camelineae</taxon>
        <taxon>Arabidopsis</taxon>
    </lineage>
</organism>